<comment type="catalytic activity">
    <reaction evidence="1">
        <text>tRNA(Phe) + L-phenylalanine + ATP = L-phenylalanyl-tRNA(Phe) + AMP + diphosphate + H(+)</text>
        <dbReference type="Rhea" id="RHEA:19413"/>
        <dbReference type="Rhea" id="RHEA-COMP:9668"/>
        <dbReference type="Rhea" id="RHEA-COMP:9699"/>
        <dbReference type="ChEBI" id="CHEBI:15378"/>
        <dbReference type="ChEBI" id="CHEBI:30616"/>
        <dbReference type="ChEBI" id="CHEBI:33019"/>
        <dbReference type="ChEBI" id="CHEBI:58095"/>
        <dbReference type="ChEBI" id="CHEBI:78442"/>
        <dbReference type="ChEBI" id="CHEBI:78531"/>
        <dbReference type="ChEBI" id="CHEBI:456215"/>
        <dbReference type="EC" id="6.1.1.20"/>
    </reaction>
</comment>
<comment type="cofactor">
    <cofactor evidence="1">
        <name>Mg(2+)</name>
        <dbReference type="ChEBI" id="CHEBI:18420"/>
    </cofactor>
    <text evidence="1">Binds 2 magnesium ions per tetramer.</text>
</comment>
<comment type="subunit">
    <text evidence="1">Tetramer of two alpha and two beta subunits.</text>
</comment>
<comment type="subcellular location">
    <subcellularLocation>
        <location evidence="1">Cytoplasm</location>
    </subcellularLocation>
</comment>
<comment type="similarity">
    <text evidence="1">Belongs to the class-II aminoacyl-tRNA synthetase family. Phe-tRNA synthetase alpha subunit type 1 subfamily.</text>
</comment>
<dbReference type="EC" id="6.1.1.20" evidence="1"/>
<dbReference type="EMBL" id="CP000010">
    <property type="protein sequence ID" value="AAU49316.1"/>
    <property type="molecule type" value="Genomic_DNA"/>
</dbReference>
<dbReference type="RefSeq" id="WP_004191909.1">
    <property type="nucleotide sequence ID" value="NC_006348.1"/>
</dbReference>
<dbReference type="SMR" id="Q62KI6"/>
<dbReference type="GeneID" id="92978835"/>
<dbReference type="KEGG" id="bma:BMA1092"/>
<dbReference type="eggNOG" id="COG0016">
    <property type="taxonomic scope" value="Bacteria"/>
</dbReference>
<dbReference type="HOGENOM" id="CLU_025086_0_1_4"/>
<dbReference type="Proteomes" id="UP000006693">
    <property type="component" value="Chromosome 1"/>
</dbReference>
<dbReference type="GO" id="GO:0005737">
    <property type="term" value="C:cytoplasm"/>
    <property type="evidence" value="ECO:0007669"/>
    <property type="project" value="UniProtKB-SubCell"/>
</dbReference>
<dbReference type="GO" id="GO:0005524">
    <property type="term" value="F:ATP binding"/>
    <property type="evidence" value="ECO:0007669"/>
    <property type="project" value="UniProtKB-UniRule"/>
</dbReference>
<dbReference type="GO" id="GO:0000287">
    <property type="term" value="F:magnesium ion binding"/>
    <property type="evidence" value="ECO:0007669"/>
    <property type="project" value="UniProtKB-UniRule"/>
</dbReference>
<dbReference type="GO" id="GO:0004826">
    <property type="term" value="F:phenylalanine-tRNA ligase activity"/>
    <property type="evidence" value="ECO:0007669"/>
    <property type="project" value="UniProtKB-UniRule"/>
</dbReference>
<dbReference type="GO" id="GO:0000049">
    <property type="term" value="F:tRNA binding"/>
    <property type="evidence" value="ECO:0007669"/>
    <property type="project" value="InterPro"/>
</dbReference>
<dbReference type="GO" id="GO:0006432">
    <property type="term" value="P:phenylalanyl-tRNA aminoacylation"/>
    <property type="evidence" value="ECO:0007669"/>
    <property type="project" value="UniProtKB-UniRule"/>
</dbReference>
<dbReference type="CDD" id="cd00496">
    <property type="entry name" value="PheRS_alpha_core"/>
    <property type="match status" value="1"/>
</dbReference>
<dbReference type="FunFam" id="3.30.930.10:FF:000003">
    <property type="entry name" value="Phenylalanine--tRNA ligase alpha subunit"/>
    <property type="match status" value="1"/>
</dbReference>
<dbReference type="Gene3D" id="3.30.930.10">
    <property type="entry name" value="Bira Bifunctional Protein, Domain 2"/>
    <property type="match status" value="1"/>
</dbReference>
<dbReference type="HAMAP" id="MF_00281">
    <property type="entry name" value="Phe_tRNA_synth_alpha1"/>
    <property type="match status" value="1"/>
</dbReference>
<dbReference type="InterPro" id="IPR006195">
    <property type="entry name" value="aa-tRNA-synth_II"/>
</dbReference>
<dbReference type="InterPro" id="IPR045864">
    <property type="entry name" value="aa-tRNA-synth_II/BPL/LPL"/>
</dbReference>
<dbReference type="InterPro" id="IPR004529">
    <property type="entry name" value="Phe-tRNA-synth_IIc_asu"/>
</dbReference>
<dbReference type="InterPro" id="IPR004188">
    <property type="entry name" value="Phe-tRNA_ligase_II_N"/>
</dbReference>
<dbReference type="InterPro" id="IPR022911">
    <property type="entry name" value="Phe_tRNA_ligase_alpha1_bac"/>
</dbReference>
<dbReference type="InterPro" id="IPR002319">
    <property type="entry name" value="Phenylalanyl-tRNA_Synthase"/>
</dbReference>
<dbReference type="InterPro" id="IPR010978">
    <property type="entry name" value="tRNA-bd_arm"/>
</dbReference>
<dbReference type="NCBIfam" id="TIGR00468">
    <property type="entry name" value="pheS"/>
    <property type="match status" value="1"/>
</dbReference>
<dbReference type="PANTHER" id="PTHR11538:SF41">
    <property type="entry name" value="PHENYLALANINE--TRNA LIGASE, MITOCHONDRIAL"/>
    <property type="match status" value="1"/>
</dbReference>
<dbReference type="PANTHER" id="PTHR11538">
    <property type="entry name" value="PHENYLALANYL-TRNA SYNTHETASE"/>
    <property type="match status" value="1"/>
</dbReference>
<dbReference type="Pfam" id="PF02912">
    <property type="entry name" value="Phe_tRNA-synt_N"/>
    <property type="match status" value="1"/>
</dbReference>
<dbReference type="Pfam" id="PF01409">
    <property type="entry name" value="tRNA-synt_2d"/>
    <property type="match status" value="1"/>
</dbReference>
<dbReference type="SUPFAM" id="SSF55681">
    <property type="entry name" value="Class II aaRS and biotin synthetases"/>
    <property type="match status" value="1"/>
</dbReference>
<dbReference type="SUPFAM" id="SSF46589">
    <property type="entry name" value="tRNA-binding arm"/>
    <property type="match status" value="1"/>
</dbReference>
<dbReference type="PROSITE" id="PS50862">
    <property type="entry name" value="AA_TRNA_LIGASE_II"/>
    <property type="match status" value="1"/>
</dbReference>
<accession>Q62KI6</accession>
<proteinExistence type="inferred from homology"/>
<reference key="1">
    <citation type="journal article" date="2004" name="Proc. Natl. Acad. Sci. U.S.A.">
        <title>Structural flexibility in the Burkholderia mallei genome.</title>
        <authorList>
            <person name="Nierman W.C."/>
            <person name="DeShazer D."/>
            <person name="Kim H.S."/>
            <person name="Tettelin H."/>
            <person name="Nelson K.E."/>
            <person name="Feldblyum T.V."/>
            <person name="Ulrich R.L."/>
            <person name="Ronning C.M."/>
            <person name="Brinkac L.M."/>
            <person name="Daugherty S.C."/>
            <person name="Davidsen T.D."/>
            <person name="DeBoy R.T."/>
            <person name="Dimitrov G."/>
            <person name="Dodson R.J."/>
            <person name="Durkin A.S."/>
            <person name="Gwinn M.L."/>
            <person name="Haft D.H."/>
            <person name="Khouri H.M."/>
            <person name="Kolonay J.F."/>
            <person name="Madupu R."/>
            <person name="Mohammoud Y."/>
            <person name="Nelson W.C."/>
            <person name="Radune D."/>
            <person name="Romero C.M."/>
            <person name="Sarria S."/>
            <person name="Selengut J."/>
            <person name="Shamblin C."/>
            <person name="Sullivan S.A."/>
            <person name="White O."/>
            <person name="Yu Y."/>
            <person name="Zafar N."/>
            <person name="Zhou L."/>
            <person name="Fraser C.M."/>
        </authorList>
    </citation>
    <scope>NUCLEOTIDE SEQUENCE [LARGE SCALE GENOMIC DNA]</scope>
    <source>
        <strain>ATCC 23344</strain>
    </source>
</reference>
<sequence length="337" mass="37996">MDLDQIVADAQQSFEGAADITTLENEKARFLGKSGALTELLKGLGKLDPETRKTEGARINVAKQQVEAALNARRQALADALLNQRLAAEAIDVTLPGRGAGAGSLHPVMRTWERVEQIFRSIGFDVADGPEIETDWYNFTALNSPENHPARSMQDTFYVDGKDADGRPLLLRTHTSPMQVRYARMNRPPIKVIAPGRTYRVDSDATHSPMFNQVEGLWIDENVSFADLKGAYTDFLKKFFERDDILVRFRPSYFPFTEPSAEIDMMFEHGKNAGKWLEISGSGQVHPTVIRNMGLDPERYIGFAFGSGLERLTMLRYGVQDLRLFFENDLRFLRQFA</sequence>
<feature type="chain" id="PRO_0000126679" description="Phenylalanine--tRNA ligase alpha subunit">
    <location>
        <begin position="1"/>
        <end position="337"/>
    </location>
</feature>
<feature type="binding site" evidence="1">
    <location>
        <position position="258"/>
    </location>
    <ligand>
        <name>Mg(2+)</name>
        <dbReference type="ChEBI" id="CHEBI:18420"/>
        <note>shared with beta subunit</note>
    </ligand>
</feature>
<keyword id="KW-0030">Aminoacyl-tRNA synthetase</keyword>
<keyword id="KW-0067">ATP-binding</keyword>
<keyword id="KW-0963">Cytoplasm</keyword>
<keyword id="KW-0436">Ligase</keyword>
<keyword id="KW-0460">Magnesium</keyword>
<keyword id="KW-0479">Metal-binding</keyword>
<keyword id="KW-0547">Nucleotide-binding</keyword>
<keyword id="KW-0648">Protein biosynthesis</keyword>
<keyword id="KW-1185">Reference proteome</keyword>
<evidence type="ECO:0000255" key="1">
    <source>
        <dbReference type="HAMAP-Rule" id="MF_00281"/>
    </source>
</evidence>
<gene>
    <name evidence="1" type="primary">pheS</name>
    <name type="ordered locus">BMA1092</name>
</gene>
<organism>
    <name type="scientific">Burkholderia mallei (strain ATCC 23344)</name>
    <dbReference type="NCBI Taxonomy" id="243160"/>
    <lineage>
        <taxon>Bacteria</taxon>
        <taxon>Pseudomonadati</taxon>
        <taxon>Pseudomonadota</taxon>
        <taxon>Betaproteobacteria</taxon>
        <taxon>Burkholderiales</taxon>
        <taxon>Burkholderiaceae</taxon>
        <taxon>Burkholderia</taxon>
        <taxon>pseudomallei group</taxon>
    </lineage>
</organism>
<protein>
    <recommendedName>
        <fullName evidence="1">Phenylalanine--tRNA ligase alpha subunit</fullName>
        <ecNumber evidence="1">6.1.1.20</ecNumber>
    </recommendedName>
    <alternativeName>
        <fullName evidence="1">Phenylalanyl-tRNA synthetase alpha subunit</fullName>
        <shortName evidence="1">PheRS</shortName>
    </alternativeName>
</protein>
<name>SYFA_BURMA</name>